<keyword id="KW-0963">Cytoplasm</keyword>
<keyword id="KW-0690">Ribosome biogenesis</keyword>
<name>RBFA_CUTAK</name>
<dbReference type="EMBL" id="AE017283">
    <property type="protein sequence ID" value="AAT83236.1"/>
    <property type="molecule type" value="Genomic_DNA"/>
</dbReference>
<dbReference type="RefSeq" id="WP_002516965.1">
    <property type="nucleotide sequence ID" value="NZ_CP025935.1"/>
</dbReference>
<dbReference type="SMR" id="Q6A7M9"/>
<dbReference type="EnsemblBacteria" id="AAT83236">
    <property type="protein sequence ID" value="AAT83236"/>
    <property type="gene ID" value="PPA1489"/>
</dbReference>
<dbReference type="GeneID" id="92857473"/>
<dbReference type="KEGG" id="pac:PPA1489"/>
<dbReference type="eggNOG" id="COG0858">
    <property type="taxonomic scope" value="Bacteria"/>
</dbReference>
<dbReference type="HOGENOM" id="CLU_089475_0_0_11"/>
<dbReference type="Proteomes" id="UP000000603">
    <property type="component" value="Chromosome"/>
</dbReference>
<dbReference type="GO" id="GO:0005829">
    <property type="term" value="C:cytosol"/>
    <property type="evidence" value="ECO:0007669"/>
    <property type="project" value="TreeGrafter"/>
</dbReference>
<dbReference type="GO" id="GO:0043024">
    <property type="term" value="F:ribosomal small subunit binding"/>
    <property type="evidence" value="ECO:0007669"/>
    <property type="project" value="TreeGrafter"/>
</dbReference>
<dbReference type="GO" id="GO:0030490">
    <property type="term" value="P:maturation of SSU-rRNA"/>
    <property type="evidence" value="ECO:0007669"/>
    <property type="project" value="UniProtKB-UniRule"/>
</dbReference>
<dbReference type="Gene3D" id="3.30.300.20">
    <property type="match status" value="1"/>
</dbReference>
<dbReference type="HAMAP" id="MF_00003">
    <property type="entry name" value="RbfA"/>
    <property type="match status" value="1"/>
</dbReference>
<dbReference type="InterPro" id="IPR015946">
    <property type="entry name" value="KH_dom-like_a/b"/>
</dbReference>
<dbReference type="InterPro" id="IPR000238">
    <property type="entry name" value="RbfA"/>
</dbReference>
<dbReference type="InterPro" id="IPR023799">
    <property type="entry name" value="RbfA_dom_sf"/>
</dbReference>
<dbReference type="InterPro" id="IPR020053">
    <property type="entry name" value="Ribosome-bd_factorA_CS"/>
</dbReference>
<dbReference type="NCBIfam" id="TIGR00082">
    <property type="entry name" value="rbfA"/>
    <property type="match status" value="1"/>
</dbReference>
<dbReference type="PANTHER" id="PTHR33515">
    <property type="entry name" value="RIBOSOME-BINDING FACTOR A, CHLOROPLASTIC-RELATED"/>
    <property type="match status" value="1"/>
</dbReference>
<dbReference type="PANTHER" id="PTHR33515:SF1">
    <property type="entry name" value="RIBOSOME-BINDING FACTOR A, CHLOROPLASTIC-RELATED"/>
    <property type="match status" value="1"/>
</dbReference>
<dbReference type="Pfam" id="PF02033">
    <property type="entry name" value="RBFA"/>
    <property type="match status" value="1"/>
</dbReference>
<dbReference type="SUPFAM" id="SSF89919">
    <property type="entry name" value="Ribosome-binding factor A, RbfA"/>
    <property type="match status" value="1"/>
</dbReference>
<dbReference type="PROSITE" id="PS01319">
    <property type="entry name" value="RBFA"/>
    <property type="match status" value="1"/>
</dbReference>
<reference key="1">
    <citation type="journal article" date="2004" name="Science">
        <title>The complete genome sequence of Propionibacterium acnes, a commensal of human skin.</title>
        <authorList>
            <person name="Brueggemann H."/>
            <person name="Henne A."/>
            <person name="Hoster F."/>
            <person name="Liesegang H."/>
            <person name="Wiezer A."/>
            <person name="Strittmatter A."/>
            <person name="Hujer S."/>
            <person name="Duerre P."/>
            <person name="Gottschalk G."/>
        </authorList>
    </citation>
    <scope>NUCLEOTIDE SEQUENCE [LARGE SCALE GENOMIC DNA]</scope>
    <source>
        <strain>DSM 16379 / KPA171202</strain>
    </source>
</reference>
<accession>Q6A7M9</accession>
<organism>
    <name type="scientific">Cutibacterium acnes (strain DSM 16379 / KPA171202)</name>
    <name type="common">Propionibacterium acnes</name>
    <dbReference type="NCBI Taxonomy" id="267747"/>
    <lineage>
        <taxon>Bacteria</taxon>
        <taxon>Bacillati</taxon>
        <taxon>Actinomycetota</taxon>
        <taxon>Actinomycetes</taxon>
        <taxon>Propionibacteriales</taxon>
        <taxon>Propionibacteriaceae</taxon>
        <taxon>Cutibacterium</taxon>
    </lineage>
</organism>
<gene>
    <name evidence="1" type="primary">rbfA</name>
    <name type="ordered locus">PPA1489</name>
</gene>
<feature type="chain" id="PRO_0000102709" description="Ribosome-binding factor A">
    <location>
        <begin position="1"/>
        <end position="143"/>
    </location>
</feature>
<feature type="region of interest" description="Disordered" evidence="2">
    <location>
        <begin position="117"/>
        <end position="143"/>
    </location>
</feature>
<feature type="compositionally biased region" description="Basic and acidic residues" evidence="2">
    <location>
        <begin position="134"/>
        <end position="143"/>
    </location>
</feature>
<protein>
    <recommendedName>
        <fullName evidence="1">Ribosome-binding factor A</fullName>
    </recommendedName>
</protein>
<sequence>MNTPNPRVAKLADQIRVVVAETLERRVKDPRLGFVTITDVRLTGDSRDATLFWTAMGTDKEIAGTEAALESAKGMLRSTVGKRLKLRYAPTLTFVRDATPETAKSIEDALARAAASDAEIARRSQGAMPAGEADPYRHSDEEE</sequence>
<comment type="function">
    <text evidence="1">One of several proteins that assist in the late maturation steps of the functional core of the 30S ribosomal subunit. Associates with free 30S ribosomal subunits (but not with 30S subunits that are part of 70S ribosomes or polysomes). Required for efficient processing of 16S rRNA. May interact with the 5'-terminal helix region of 16S rRNA.</text>
</comment>
<comment type="subunit">
    <text evidence="1">Monomer. Binds 30S ribosomal subunits, but not 50S ribosomal subunits or 70S ribosomes.</text>
</comment>
<comment type="subcellular location">
    <subcellularLocation>
        <location evidence="1">Cytoplasm</location>
    </subcellularLocation>
</comment>
<comment type="similarity">
    <text evidence="1">Belongs to the RbfA family.</text>
</comment>
<evidence type="ECO:0000255" key="1">
    <source>
        <dbReference type="HAMAP-Rule" id="MF_00003"/>
    </source>
</evidence>
<evidence type="ECO:0000256" key="2">
    <source>
        <dbReference type="SAM" id="MobiDB-lite"/>
    </source>
</evidence>
<proteinExistence type="inferred from homology"/>